<sequence>MLMLLVRGTHYESLRSKVVLPTPLGGRGTEALVSECPSPDTGIRWRQSDEALRVNVGGVRRLLSARALARFPGTRLGRLQAAASEEQARRLCDDYDAAAREFYFDRHPGFFLGLLHFYRTGHLHVLDELCVFAFGQEADYWGLGENALAACCRARYLERRLTQPRAWDEDSDTPSSVDPCPDEISDVQRELARYGAARCGRLRRRLWLTMENPGYSLPSKLFSCVSISVVLASIAAMCIHSLPEYQAREAAAAVAAVAAGRSPEGVRDDPVLRRLEYFCIAWFSFEVSSRLLLAPSTRNFFCHPLNLIDIVSVLPFYLTLLAGVALGDQGGTGGKELGHLGKVVQVFRLMRIFRVLKLARHSTGLRSLGATLKHSYREVGILLLYLAVGVSVFSGVAYTAEKEEDVGFNTIPACWWWGTVSMTTVGYGDVVPVTVAGKLAASGCILGGILVVALPITIIFNKFSHFYRRQKALEAAVRNSNHQEFEDLLSSVDGVSEASLETSRETSQEGRSADLETQAPSEPPHPQMY</sequence>
<accession>A4K2T1</accession>
<protein>
    <recommendedName>
        <fullName evidence="3">Delayed-rectifier potassium channel regulatory subunit KCNS1</fullName>
    </recommendedName>
    <alternativeName>
        <fullName>Delayed-rectifier K(+) channel alpha subunit 1</fullName>
    </alternativeName>
    <alternativeName>
        <fullName evidence="3">Delayed-rectifier potassium channel subunit Kv9.1</fullName>
    </alternativeName>
</protein>
<proteinExistence type="inferred from homology"/>
<name>KCNS1_MACMU</name>
<dbReference type="EMBL" id="DP000043">
    <property type="protein sequence ID" value="ABO52966.1"/>
    <property type="molecule type" value="Genomic_DNA"/>
</dbReference>
<dbReference type="RefSeq" id="XP_015004318.1">
    <property type="nucleotide sequence ID" value="XM_015148832.1"/>
</dbReference>
<dbReference type="SMR" id="A4K2T1"/>
<dbReference type="FunCoup" id="A4K2T1">
    <property type="interactions" value="30"/>
</dbReference>
<dbReference type="STRING" id="9544.ENSMMUP00000017362"/>
<dbReference type="PaxDb" id="9544-ENSMMUP00000017362"/>
<dbReference type="GeneID" id="711715"/>
<dbReference type="CTD" id="3787"/>
<dbReference type="eggNOG" id="KOG3713">
    <property type="taxonomic scope" value="Eukaryota"/>
</dbReference>
<dbReference type="InParanoid" id="A4K2T1"/>
<dbReference type="OrthoDB" id="296522at2759"/>
<dbReference type="Proteomes" id="UP000006718">
    <property type="component" value="Unassembled WGS sequence"/>
</dbReference>
<dbReference type="GO" id="GO:0016020">
    <property type="term" value="C:membrane"/>
    <property type="evidence" value="ECO:0000318"/>
    <property type="project" value="GO_Central"/>
</dbReference>
<dbReference type="GO" id="GO:0048471">
    <property type="term" value="C:perinuclear region of cytoplasm"/>
    <property type="evidence" value="ECO:0000250"/>
    <property type="project" value="UniProtKB"/>
</dbReference>
<dbReference type="GO" id="GO:0005886">
    <property type="term" value="C:plasma membrane"/>
    <property type="evidence" value="ECO:0000250"/>
    <property type="project" value="UniProtKB"/>
</dbReference>
<dbReference type="GO" id="GO:0008076">
    <property type="term" value="C:voltage-gated potassium channel complex"/>
    <property type="evidence" value="ECO:0000250"/>
    <property type="project" value="UniProtKB"/>
</dbReference>
<dbReference type="GO" id="GO:0015459">
    <property type="term" value="F:potassium channel regulator activity"/>
    <property type="evidence" value="ECO:0000250"/>
    <property type="project" value="UniProtKB"/>
</dbReference>
<dbReference type="GO" id="GO:0005249">
    <property type="term" value="F:voltage-gated potassium channel activity"/>
    <property type="evidence" value="ECO:0007669"/>
    <property type="project" value="InterPro"/>
</dbReference>
<dbReference type="GO" id="GO:0001508">
    <property type="term" value="P:action potential"/>
    <property type="evidence" value="ECO:0000318"/>
    <property type="project" value="GO_Central"/>
</dbReference>
<dbReference type="GO" id="GO:0071805">
    <property type="term" value="P:potassium ion transmembrane transport"/>
    <property type="evidence" value="ECO:0000318"/>
    <property type="project" value="GO_Central"/>
</dbReference>
<dbReference type="GO" id="GO:0006813">
    <property type="term" value="P:potassium ion transport"/>
    <property type="evidence" value="ECO:0000250"/>
    <property type="project" value="UniProtKB"/>
</dbReference>
<dbReference type="GO" id="GO:0051260">
    <property type="term" value="P:protein homooligomerization"/>
    <property type="evidence" value="ECO:0007669"/>
    <property type="project" value="InterPro"/>
</dbReference>
<dbReference type="GO" id="GO:1901379">
    <property type="term" value="P:regulation of potassium ion transmembrane transport"/>
    <property type="evidence" value="ECO:0000250"/>
    <property type="project" value="UniProtKB"/>
</dbReference>
<dbReference type="FunFam" id="1.10.287.70:FF:000005">
    <property type="entry name" value="potassium voltage-gated channel subfamily G member 1"/>
    <property type="match status" value="1"/>
</dbReference>
<dbReference type="FunFam" id="3.30.710.10:FF:000102">
    <property type="entry name" value="Potassium voltage-gated channel subfamily S member 1"/>
    <property type="match status" value="1"/>
</dbReference>
<dbReference type="FunFam" id="1.20.120.350:FF:000029">
    <property type="entry name" value="Potassium voltage-gated channel subfamily S member 2"/>
    <property type="match status" value="1"/>
</dbReference>
<dbReference type="Gene3D" id="1.10.287.70">
    <property type="match status" value="1"/>
</dbReference>
<dbReference type="Gene3D" id="3.30.710.10">
    <property type="entry name" value="Potassium Channel Kv1.1, Chain A"/>
    <property type="match status" value="1"/>
</dbReference>
<dbReference type="Gene3D" id="1.20.120.350">
    <property type="entry name" value="Voltage-gated potassium channels. Chain C"/>
    <property type="match status" value="1"/>
</dbReference>
<dbReference type="InterPro" id="IPR000210">
    <property type="entry name" value="BTB/POZ_dom"/>
</dbReference>
<dbReference type="InterPro" id="IPR005821">
    <property type="entry name" value="Ion_trans_dom"/>
</dbReference>
<dbReference type="InterPro" id="IPR003968">
    <property type="entry name" value="K_chnl_volt-dep_Kv"/>
</dbReference>
<dbReference type="InterPro" id="IPR003971">
    <property type="entry name" value="K_chnl_volt-dep_Kv5/Kv9"/>
</dbReference>
<dbReference type="InterPro" id="IPR011333">
    <property type="entry name" value="SKP1/BTB/POZ_sf"/>
</dbReference>
<dbReference type="InterPro" id="IPR003131">
    <property type="entry name" value="T1-type_BTB"/>
</dbReference>
<dbReference type="InterPro" id="IPR028325">
    <property type="entry name" value="VG_K_chnl"/>
</dbReference>
<dbReference type="InterPro" id="IPR027359">
    <property type="entry name" value="Volt_channel_dom_sf"/>
</dbReference>
<dbReference type="PANTHER" id="PTHR11537:SF61">
    <property type="entry name" value="POTASSIUM VOLTAGE-GATED CHANNEL SUBFAMILY S MEMBER 1"/>
    <property type="match status" value="1"/>
</dbReference>
<dbReference type="PANTHER" id="PTHR11537">
    <property type="entry name" value="VOLTAGE-GATED POTASSIUM CHANNEL"/>
    <property type="match status" value="1"/>
</dbReference>
<dbReference type="Pfam" id="PF02214">
    <property type="entry name" value="BTB_2"/>
    <property type="match status" value="1"/>
</dbReference>
<dbReference type="Pfam" id="PF00520">
    <property type="entry name" value="Ion_trans"/>
    <property type="match status" value="1"/>
</dbReference>
<dbReference type="PRINTS" id="PR00169">
    <property type="entry name" value="KCHANNEL"/>
</dbReference>
<dbReference type="PRINTS" id="PR01494">
    <property type="entry name" value="KV9CHANNEL"/>
</dbReference>
<dbReference type="PRINTS" id="PR01491">
    <property type="entry name" value="KVCHANNEL"/>
</dbReference>
<dbReference type="SMART" id="SM00225">
    <property type="entry name" value="BTB"/>
    <property type="match status" value="1"/>
</dbReference>
<dbReference type="SUPFAM" id="SSF54695">
    <property type="entry name" value="POZ domain"/>
    <property type="match status" value="1"/>
</dbReference>
<dbReference type="SUPFAM" id="SSF81324">
    <property type="entry name" value="Voltage-gated potassium channels"/>
    <property type="match status" value="1"/>
</dbReference>
<keyword id="KW-1003">Cell membrane</keyword>
<keyword id="KW-0407">Ion channel</keyword>
<keyword id="KW-0406">Ion transport</keyword>
<keyword id="KW-0472">Membrane</keyword>
<keyword id="KW-0630">Potassium</keyword>
<keyword id="KW-0631">Potassium channel</keyword>
<keyword id="KW-0633">Potassium transport</keyword>
<keyword id="KW-1185">Reference proteome</keyword>
<keyword id="KW-0812">Transmembrane</keyword>
<keyword id="KW-1133">Transmembrane helix</keyword>
<keyword id="KW-0813">Transport</keyword>
<keyword id="KW-0851">Voltage-gated channel</keyword>
<reference key="1">
    <citation type="journal article" date="2007" name="Genome Res.">
        <title>Comparative sequence analyses reveal rapid and divergent evolutionary changes of the WFDC locus in the primate lineage.</title>
        <authorList>
            <consortium name="NISC comparative sequencing program"/>
            <person name="Hurle B."/>
            <person name="Swanson W."/>
            <person name="Green E.D."/>
        </authorList>
    </citation>
    <scope>NUCLEOTIDE SEQUENCE [GENOMIC DNA]</scope>
</reference>
<feature type="chain" id="PRO_0000289618" description="Delayed-rectifier potassium channel regulatory subunit KCNS1">
    <location>
        <begin position="1"/>
        <end position="529"/>
    </location>
</feature>
<feature type="topological domain" description="Cytoplasmic" evidence="2">
    <location>
        <begin position="1"/>
        <end position="217"/>
    </location>
</feature>
<feature type="transmembrane region" description="Helical; Name=Segment S1" evidence="2">
    <location>
        <begin position="218"/>
        <end position="239"/>
    </location>
</feature>
<feature type="topological domain" description="Extracellular" evidence="2">
    <location>
        <begin position="240"/>
        <end position="270"/>
    </location>
</feature>
<feature type="transmembrane region" description="Helical; Name=Segment S2" evidence="2">
    <location>
        <begin position="271"/>
        <end position="293"/>
    </location>
</feature>
<feature type="topological domain" description="Cytoplasmic" evidence="2">
    <location>
        <begin position="294"/>
        <end position="304"/>
    </location>
</feature>
<feature type="transmembrane region" description="Helical; Name=Segment S3" evidence="2">
    <location>
        <begin position="305"/>
        <end position="322"/>
    </location>
</feature>
<feature type="topological domain" description="Extracellular" evidence="2">
    <location>
        <begin position="323"/>
        <end position="340"/>
    </location>
</feature>
<feature type="transmembrane region" description="Helical; Voltage-sensor; Name=Segment S4" evidence="2">
    <location>
        <begin position="341"/>
        <end position="361"/>
    </location>
</feature>
<feature type="topological domain" description="Cytoplasmic" evidence="2">
    <location>
        <begin position="362"/>
        <end position="376"/>
    </location>
</feature>
<feature type="transmembrane region" description="Helical; Name=Segment S5" evidence="2">
    <location>
        <begin position="377"/>
        <end position="398"/>
    </location>
</feature>
<feature type="topological domain" description="Extracellular" evidence="2">
    <location>
        <begin position="399"/>
        <end position="411"/>
    </location>
</feature>
<feature type="intramembrane region" description="Helical; Name=Pore helix" evidence="2">
    <location>
        <begin position="412"/>
        <end position="423"/>
    </location>
</feature>
<feature type="intramembrane region" evidence="2">
    <location>
        <begin position="424"/>
        <end position="431"/>
    </location>
</feature>
<feature type="topological domain" description="Extracellular" evidence="2">
    <location>
        <begin position="432"/>
        <end position="438"/>
    </location>
</feature>
<feature type="transmembrane region" description="Helical; Name=Segment S6" evidence="2">
    <location>
        <begin position="439"/>
        <end position="467"/>
    </location>
</feature>
<feature type="topological domain" description="Cytoplasmic" evidence="2">
    <location>
        <begin position="468"/>
        <end position="529"/>
    </location>
</feature>
<feature type="region of interest" description="Disordered" evidence="4">
    <location>
        <begin position="494"/>
        <end position="529"/>
    </location>
</feature>
<feature type="short sequence motif" description="Selectivity filter" evidence="2">
    <location>
        <begin position="424"/>
        <end position="429"/>
    </location>
</feature>
<feature type="compositionally biased region" description="Basic and acidic residues" evidence="4">
    <location>
        <begin position="502"/>
        <end position="514"/>
    </location>
</feature>
<gene>
    <name evidence="3" type="primary">KCNS1</name>
</gene>
<organism>
    <name type="scientific">Macaca mulatta</name>
    <name type="common">Rhesus macaque</name>
    <dbReference type="NCBI Taxonomy" id="9544"/>
    <lineage>
        <taxon>Eukaryota</taxon>
        <taxon>Metazoa</taxon>
        <taxon>Chordata</taxon>
        <taxon>Craniata</taxon>
        <taxon>Vertebrata</taxon>
        <taxon>Euteleostomi</taxon>
        <taxon>Mammalia</taxon>
        <taxon>Eutheria</taxon>
        <taxon>Euarchontoglires</taxon>
        <taxon>Primates</taxon>
        <taxon>Haplorrhini</taxon>
        <taxon>Catarrhini</taxon>
        <taxon>Cercopithecidae</taxon>
        <taxon>Cercopithecinae</taxon>
        <taxon>Macaca</taxon>
    </lineage>
</organism>
<evidence type="ECO:0000250" key="1">
    <source>
        <dbReference type="UniProtKB" id="O35173"/>
    </source>
</evidence>
<evidence type="ECO:0000250" key="2">
    <source>
        <dbReference type="UniProtKB" id="P63142"/>
    </source>
</evidence>
<evidence type="ECO:0000250" key="3">
    <source>
        <dbReference type="UniProtKB" id="Q96KK3"/>
    </source>
</evidence>
<evidence type="ECO:0000256" key="4">
    <source>
        <dbReference type="SAM" id="MobiDB-lite"/>
    </source>
</evidence>
<evidence type="ECO:0000305" key="5"/>
<comment type="function">
    <text evidence="1 3">Potassium channel regulatory subunit that modulate the delayed rectifier voltage-gated potassium channel activity of KCNB1 and KCNB2 by altering their kinetics, expression levels, and shifting the half-inactivation potential to more polarized values. While it does not form functional channels on its own, it can form functional heterotetrameric channels with KCNB1 and KCNB2 (By similarity). Each regulatory subunit has unique regulatory properties that can lead to extensive inhibition, significant changes in kinetics, and/or substantial shifts in the voltage dependencies of the inactivation process (By similarity).</text>
</comment>
<comment type="subunit">
    <text evidence="1 3">Heterotetramer with KCNB1 (By similarity). Heterotetramer with KCNB2 (By similarity). Does not form homomultimers (By similarity).</text>
</comment>
<comment type="subcellular location">
    <subcellularLocation>
        <location evidence="3">Cell membrane</location>
        <topology evidence="3">Multi-pass membrane protein</topology>
    </subcellularLocation>
    <text evidence="3">May not reach the plasma membrane but remain in an intracellular compartment in the absence of KCNB1 or KCNB2.</text>
</comment>
<comment type="domain">
    <text evidence="2">The transmembrane segment S4 functions as a voltage-sensor and is characterized by a series of positively charged amino acids at every third position. Channel opening and closing is effected by a conformation change that affects the position and orientation of the voltage-sensor paddle formed by S3 and S4 within the membrane. A transmembrane electric field that is positive inside would push the positively charged S4 segment outwards, thereby opening the pore, while a field that is negative inside would pull the S4 segment inwards and close the pore. Changes in the position and orientation of S4 are then transmitted to the activation gate formed by the inner helix bundle via the S4-S5 linker region.</text>
</comment>
<comment type="similarity">
    <text evidence="5">Belongs to the potassium channel family. S (TC 1.A.1.2) subfamily. Kv9.1/KCNS1 sub-subfamily.</text>
</comment>